<keyword id="KW-0963">Cytoplasm</keyword>
<keyword id="KW-0489">Methyltransferase</keyword>
<keyword id="KW-0949">S-adenosyl-L-methionine</keyword>
<keyword id="KW-0808">Transferase</keyword>
<keyword id="KW-0819">tRNA processing</keyword>
<sequence length="169" mass="19488">MPNHIVLYQPEIPANTGNISRTCAGTDTYLHLIRPLGFSTDDKMLKRAGLDYWDNVKLSYYDSLDEFFEKNAGGEFYYITKFGRHVYSDVDYSDPNKNYFFVFGKETTGLPDELLQANEENCLRIPMTDHIRSLNLSNTAAVLAYEALRQQSFGALLQEPNYDRKIFKD</sequence>
<dbReference type="EC" id="2.1.1.207" evidence="1"/>
<dbReference type="EMBL" id="AL596166">
    <property type="status" value="NOT_ANNOTATED_CDS"/>
    <property type="molecule type" value="Genomic_DNA"/>
</dbReference>
<dbReference type="EMBL" id="AL596167">
    <property type="status" value="NOT_ANNOTATED_CDS"/>
    <property type="molecule type" value="Genomic_DNA"/>
</dbReference>
<dbReference type="SMR" id="P69001"/>
<dbReference type="OrthoDB" id="9789043at2"/>
<dbReference type="Proteomes" id="UP000002513">
    <property type="component" value="Chromosome"/>
</dbReference>
<dbReference type="GO" id="GO:0005737">
    <property type="term" value="C:cytoplasm"/>
    <property type="evidence" value="ECO:0007669"/>
    <property type="project" value="UniProtKB-SubCell"/>
</dbReference>
<dbReference type="GO" id="GO:0003723">
    <property type="term" value="F:RNA binding"/>
    <property type="evidence" value="ECO:0007669"/>
    <property type="project" value="InterPro"/>
</dbReference>
<dbReference type="GO" id="GO:0141102">
    <property type="term" value="F:tRNA (5-carboxymethylaminomethyluridine(34)-2'-O)-methyltransferase activity"/>
    <property type="evidence" value="ECO:0007669"/>
    <property type="project" value="RHEA"/>
</dbReference>
<dbReference type="GO" id="GO:0141098">
    <property type="term" value="F:tRNA (cytidine(34)-2'-O)-methyltransferase activity"/>
    <property type="evidence" value="ECO:0007669"/>
    <property type="project" value="RHEA"/>
</dbReference>
<dbReference type="GO" id="GO:0002130">
    <property type="term" value="P:wobble position ribose methylation"/>
    <property type="evidence" value="ECO:0007669"/>
    <property type="project" value="TreeGrafter"/>
</dbReference>
<dbReference type="CDD" id="cd18094">
    <property type="entry name" value="SpoU-like_TrmL"/>
    <property type="match status" value="1"/>
</dbReference>
<dbReference type="FunFam" id="3.40.1280.10:FF:000002">
    <property type="entry name" value="Peptidylprolyl isomerase"/>
    <property type="match status" value="1"/>
</dbReference>
<dbReference type="Gene3D" id="3.40.1280.10">
    <property type="match status" value="1"/>
</dbReference>
<dbReference type="HAMAP" id="MF_01885">
    <property type="entry name" value="tRNA_methyltr_TrmL"/>
    <property type="match status" value="1"/>
</dbReference>
<dbReference type="InterPro" id="IPR029028">
    <property type="entry name" value="Alpha/beta_knot_MTases"/>
</dbReference>
<dbReference type="InterPro" id="IPR001537">
    <property type="entry name" value="SpoU_MeTrfase"/>
</dbReference>
<dbReference type="InterPro" id="IPR016914">
    <property type="entry name" value="TrmL"/>
</dbReference>
<dbReference type="InterPro" id="IPR029026">
    <property type="entry name" value="tRNA_m1G_MTases_N"/>
</dbReference>
<dbReference type="NCBIfam" id="TIGR00185">
    <property type="entry name" value="tRNA_yibK_trmL"/>
    <property type="match status" value="1"/>
</dbReference>
<dbReference type="PANTHER" id="PTHR42971">
    <property type="entry name" value="TRNA (CYTIDINE(34)-2'-O)-METHYLTRANSFERASE"/>
    <property type="match status" value="1"/>
</dbReference>
<dbReference type="PANTHER" id="PTHR42971:SF1">
    <property type="entry name" value="TRNA (CYTIDINE(34)-2'-O)-METHYLTRANSFERASE"/>
    <property type="match status" value="1"/>
</dbReference>
<dbReference type="Pfam" id="PF00588">
    <property type="entry name" value="SpoU_methylase"/>
    <property type="match status" value="1"/>
</dbReference>
<dbReference type="PIRSF" id="PIRSF029256">
    <property type="entry name" value="SpoU_TrmH_prd"/>
    <property type="match status" value="1"/>
</dbReference>
<dbReference type="SUPFAM" id="SSF75217">
    <property type="entry name" value="alpha/beta knot"/>
    <property type="match status" value="1"/>
</dbReference>
<reference key="1">
    <citation type="journal article" date="2001" name="Science">
        <title>Comparative genomics of Listeria species.</title>
        <authorList>
            <person name="Glaser P."/>
            <person name="Frangeul L."/>
            <person name="Buchrieser C."/>
            <person name="Rusniok C."/>
            <person name="Amend A."/>
            <person name="Baquero F."/>
            <person name="Berche P."/>
            <person name="Bloecker H."/>
            <person name="Brandt P."/>
            <person name="Chakraborty T."/>
            <person name="Charbit A."/>
            <person name="Chetouani F."/>
            <person name="Couve E."/>
            <person name="de Daruvar A."/>
            <person name="Dehoux P."/>
            <person name="Domann E."/>
            <person name="Dominguez-Bernal G."/>
            <person name="Duchaud E."/>
            <person name="Durant L."/>
            <person name="Dussurget O."/>
            <person name="Entian K.-D."/>
            <person name="Fsihi H."/>
            <person name="Garcia-del Portillo F."/>
            <person name="Garrido P."/>
            <person name="Gautier L."/>
            <person name="Goebel W."/>
            <person name="Gomez-Lopez N."/>
            <person name="Hain T."/>
            <person name="Hauf J."/>
            <person name="Jackson D."/>
            <person name="Jones L.-M."/>
            <person name="Kaerst U."/>
            <person name="Kreft J."/>
            <person name="Kuhn M."/>
            <person name="Kunst F."/>
            <person name="Kurapkat G."/>
            <person name="Madueno E."/>
            <person name="Maitournam A."/>
            <person name="Mata Vicente J."/>
            <person name="Ng E."/>
            <person name="Nedjari H."/>
            <person name="Nordsiek G."/>
            <person name="Novella S."/>
            <person name="de Pablos B."/>
            <person name="Perez-Diaz J.-C."/>
            <person name="Purcell R."/>
            <person name="Remmel B."/>
            <person name="Rose M."/>
            <person name="Schlueter T."/>
            <person name="Simoes N."/>
            <person name="Tierrez A."/>
            <person name="Vazquez-Boland J.-A."/>
            <person name="Voss H."/>
            <person name="Wehland J."/>
            <person name="Cossart P."/>
        </authorList>
    </citation>
    <scope>NUCLEOTIDE SEQUENCE [LARGE SCALE GENOMIC DNA]</scope>
    <source>
        <strain>ATCC BAA-680 / CLIP 11262</strain>
    </source>
</reference>
<reference key="2">
    <citation type="journal article" date="2005" name="Bioinformatics">
        <title>Improving genome annotations using phylogenetic profile anomaly detection.</title>
        <authorList>
            <person name="Mikkelsen T.S."/>
            <person name="Galagan J.E."/>
            <person name="Mesirov J.P."/>
        </authorList>
    </citation>
    <scope>IDENTIFICATION</scope>
</reference>
<feature type="chain" id="PRO_0000159831" description="Putative tRNA (cytidine(34)-2'-O)-methyltransferase">
    <location>
        <begin position="1"/>
        <end position="169"/>
    </location>
</feature>
<feature type="binding site" evidence="1">
    <location>
        <position position="79"/>
    </location>
    <ligand>
        <name>S-adenosyl-L-methionine</name>
        <dbReference type="ChEBI" id="CHEBI:59789"/>
    </ligand>
</feature>
<feature type="binding site" evidence="1">
    <location>
        <position position="104"/>
    </location>
    <ligand>
        <name>S-adenosyl-L-methionine</name>
        <dbReference type="ChEBI" id="CHEBI:59789"/>
    </ligand>
</feature>
<feature type="binding site" evidence="1">
    <location>
        <position position="125"/>
    </location>
    <ligand>
        <name>S-adenosyl-L-methionine</name>
        <dbReference type="ChEBI" id="CHEBI:59789"/>
    </ligand>
</feature>
<feature type="binding site" evidence="1">
    <location>
        <position position="133"/>
    </location>
    <ligand>
        <name>S-adenosyl-L-methionine</name>
        <dbReference type="ChEBI" id="CHEBI:59789"/>
    </ligand>
</feature>
<comment type="function">
    <text evidence="1">Could methylate the ribose at the nucleotide 34 wobble position in tRNA.</text>
</comment>
<comment type="catalytic activity">
    <reaction evidence="1">
        <text>cytidine(34) in tRNA + S-adenosyl-L-methionine = 2'-O-methylcytidine(34) in tRNA + S-adenosyl-L-homocysteine + H(+)</text>
        <dbReference type="Rhea" id="RHEA:43084"/>
        <dbReference type="Rhea" id="RHEA-COMP:10331"/>
        <dbReference type="Rhea" id="RHEA-COMP:10332"/>
        <dbReference type="ChEBI" id="CHEBI:15378"/>
        <dbReference type="ChEBI" id="CHEBI:57856"/>
        <dbReference type="ChEBI" id="CHEBI:59789"/>
        <dbReference type="ChEBI" id="CHEBI:74495"/>
        <dbReference type="ChEBI" id="CHEBI:82748"/>
        <dbReference type="EC" id="2.1.1.207"/>
    </reaction>
</comment>
<comment type="catalytic activity">
    <reaction evidence="1">
        <text>5-carboxymethylaminomethyluridine(34) in tRNA(Leu) + S-adenosyl-L-methionine = 5-carboxymethylaminomethyl-2'-O-methyluridine(34) in tRNA(Leu) + S-adenosyl-L-homocysteine + H(+)</text>
        <dbReference type="Rhea" id="RHEA:43088"/>
        <dbReference type="Rhea" id="RHEA-COMP:10333"/>
        <dbReference type="Rhea" id="RHEA-COMP:10334"/>
        <dbReference type="ChEBI" id="CHEBI:15378"/>
        <dbReference type="ChEBI" id="CHEBI:57856"/>
        <dbReference type="ChEBI" id="CHEBI:59789"/>
        <dbReference type="ChEBI" id="CHEBI:74508"/>
        <dbReference type="ChEBI" id="CHEBI:74511"/>
        <dbReference type="EC" id="2.1.1.207"/>
    </reaction>
</comment>
<comment type="subcellular location">
    <subcellularLocation>
        <location evidence="1">Cytoplasm</location>
    </subcellularLocation>
</comment>
<comment type="similarity">
    <text evidence="1">Belongs to the class IV-like SAM-binding methyltransferase superfamily. RNA methyltransferase TrmH family. TrmL subfamily.</text>
</comment>
<gene>
    <name type="ordered locus">lin0934</name>
</gene>
<protein>
    <recommendedName>
        <fullName evidence="1">Putative tRNA (cytidine(34)-2'-O)-methyltransferase</fullName>
        <ecNumber evidence="1">2.1.1.207</ecNumber>
    </recommendedName>
    <alternativeName>
        <fullName evidence="1">tRNA (cytidine/uridine-2'-O-)-methyltransferase</fullName>
    </alternativeName>
</protein>
<evidence type="ECO:0000255" key="1">
    <source>
        <dbReference type="HAMAP-Rule" id="MF_01885"/>
    </source>
</evidence>
<name>TRML_LISIN</name>
<accession>P69001</accession>
<organism>
    <name type="scientific">Listeria innocua serovar 6a (strain ATCC BAA-680 / CLIP 11262)</name>
    <dbReference type="NCBI Taxonomy" id="272626"/>
    <lineage>
        <taxon>Bacteria</taxon>
        <taxon>Bacillati</taxon>
        <taxon>Bacillota</taxon>
        <taxon>Bacilli</taxon>
        <taxon>Bacillales</taxon>
        <taxon>Listeriaceae</taxon>
        <taxon>Listeria</taxon>
    </lineage>
</organism>
<proteinExistence type="inferred from homology"/>